<organism>
    <name type="scientific">Rattus norvegicus</name>
    <name type="common">Rat</name>
    <dbReference type="NCBI Taxonomy" id="10116"/>
    <lineage>
        <taxon>Eukaryota</taxon>
        <taxon>Metazoa</taxon>
        <taxon>Chordata</taxon>
        <taxon>Craniata</taxon>
        <taxon>Vertebrata</taxon>
        <taxon>Euteleostomi</taxon>
        <taxon>Mammalia</taxon>
        <taxon>Eutheria</taxon>
        <taxon>Euarchontoglires</taxon>
        <taxon>Glires</taxon>
        <taxon>Rodentia</taxon>
        <taxon>Myomorpha</taxon>
        <taxon>Muroidea</taxon>
        <taxon>Muridae</taxon>
        <taxon>Murinae</taxon>
        <taxon>Rattus</taxon>
    </lineage>
</organism>
<dbReference type="EMBL" id="X62841">
    <property type="protein sequence ID" value="CAA44645.1"/>
    <property type="molecule type" value="mRNA"/>
</dbReference>
<dbReference type="PIR" id="S13919">
    <property type="entry name" value="S13919"/>
</dbReference>
<dbReference type="RefSeq" id="NP_001116248.1">
    <property type="nucleotide sequence ID" value="NM_001122776.1"/>
</dbReference>
<dbReference type="SMR" id="Q63734"/>
<dbReference type="BioGRID" id="599395">
    <property type="interactions" value="1"/>
</dbReference>
<dbReference type="FunCoup" id="Q63734">
    <property type="interactions" value="697"/>
</dbReference>
<dbReference type="STRING" id="10116.ENSRNOP00000068863"/>
<dbReference type="DrugCentral" id="Q63734"/>
<dbReference type="GuidetoPHARMACOLOGY" id="551"/>
<dbReference type="GlyCosmos" id="Q63734">
    <property type="glycosylation" value="2 sites, No reported glycans"/>
</dbReference>
<dbReference type="GlyGen" id="Q63734">
    <property type="glycosylation" value="3 sites"/>
</dbReference>
<dbReference type="PhosphoSitePlus" id="Q63734"/>
<dbReference type="PaxDb" id="10116-ENSRNOP00000065398"/>
<dbReference type="ABCD" id="Q63734">
    <property type="antibodies" value="1 sequenced antibody"/>
</dbReference>
<dbReference type="GeneID" id="684516"/>
<dbReference type="KEGG" id="rno:684516"/>
<dbReference type="AGR" id="RGD:1589169"/>
<dbReference type="CTD" id="3749"/>
<dbReference type="RGD" id="1589169">
    <property type="gene designation" value="Kcnc4"/>
</dbReference>
<dbReference type="eggNOG" id="KOG3713">
    <property type="taxonomic scope" value="Eukaryota"/>
</dbReference>
<dbReference type="InParanoid" id="Q63734"/>
<dbReference type="PhylomeDB" id="Q63734"/>
<dbReference type="Reactome" id="R-RNO-1296072">
    <property type="pathway name" value="Voltage gated Potassium channels"/>
</dbReference>
<dbReference type="PRO" id="PR:Q63734"/>
<dbReference type="Proteomes" id="UP000002494">
    <property type="component" value="Unplaced"/>
</dbReference>
<dbReference type="GO" id="GO:0030424">
    <property type="term" value="C:axon"/>
    <property type="evidence" value="ECO:0000314"/>
    <property type="project" value="RGD"/>
</dbReference>
<dbReference type="GO" id="GO:0043679">
    <property type="term" value="C:axon terminus"/>
    <property type="evidence" value="ECO:0000266"/>
    <property type="project" value="RGD"/>
</dbReference>
<dbReference type="GO" id="GO:0044305">
    <property type="term" value="C:calyx of Held"/>
    <property type="evidence" value="ECO:0000314"/>
    <property type="project" value="SynGO"/>
</dbReference>
<dbReference type="GO" id="GO:0009986">
    <property type="term" value="C:cell surface"/>
    <property type="evidence" value="ECO:0000314"/>
    <property type="project" value="RGD"/>
</dbReference>
<dbReference type="GO" id="GO:0030425">
    <property type="term" value="C:dendrite"/>
    <property type="evidence" value="ECO:0000314"/>
    <property type="project" value="RGD"/>
</dbReference>
<dbReference type="GO" id="GO:0032590">
    <property type="term" value="C:dendrite membrane"/>
    <property type="evidence" value="ECO:0000318"/>
    <property type="project" value="GO_Central"/>
</dbReference>
<dbReference type="GO" id="GO:0098978">
    <property type="term" value="C:glutamatergic synapse"/>
    <property type="evidence" value="ECO:0000314"/>
    <property type="project" value="SynGO"/>
</dbReference>
<dbReference type="GO" id="GO:0098690">
    <property type="term" value="C:glycinergic synapse"/>
    <property type="evidence" value="ECO:0000314"/>
    <property type="project" value="SynGO"/>
</dbReference>
<dbReference type="GO" id="GO:0031594">
    <property type="term" value="C:neuromuscular junction"/>
    <property type="evidence" value="ECO:0000266"/>
    <property type="project" value="RGD"/>
</dbReference>
<dbReference type="GO" id="GO:0043025">
    <property type="term" value="C:neuronal cell body"/>
    <property type="evidence" value="ECO:0000314"/>
    <property type="project" value="RGD"/>
</dbReference>
<dbReference type="GO" id="GO:0032809">
    <property type="term" value="C:neuronal cell body membrane"/>
    <property type="evidence" value="ECO:0000318"/>
    <property type="project" value="GO_Central"/>
</dbReference>
<dbReference type="GO" id="GO:0098794">
    <property type="term" value="C:postsynapse"/>
    <property type="evidence" value="ECO:0000314"/>
    <property type="project" value="RGD"/>
</dbReference>
<dbReference type="GO" id="GO:0045211">
    <property type="term" value="C:postsynaptic membrane"/>
    <property type="evidence" value="ECO:0000314"/>
    <property type="project" value="SynGO"/>
</dbReference>
<dbReference type="GO" id="GO:0042734">
    <property type="term" value="C:presynaptic membrane"/>
    <property type="evidence" value="ECO:0000314"/>
    <property type="project" value="SynGO"/>
</dbReference>
<dbReference type="GO" id="GO:0008021">
    <property type="term" value="C:synaptic vesicle"/>
    <property type="evidence" value="ECO:0000314"/>
    <property type="project" value="RGD"/>
</dbReference>
<dbReference type="GO" id="GO:0008076">
    <property type="term" value="C:voltage-gated potassium channel complex"/>
    <property type="evidence" value="ECO:0000318"/>
    <property type="project" value="GO_Central"/>
</dbReference>
<dbReference type="GO" id="GO:0005251">
    <property type="term" value="F:delayed rectifier potassium channel activity"/>
    <property type="evidence" value="ECO:0000318"/>
    <property type="project" value="GO_Central"/>
</dbReference>
<dbReference type="GO" id="GO:0046872">
    <property type="term" value="F:metal ion binding"/>
    <property type="evidence" value="ECO:0007669"/>
    <property type="project" value="UniProtKB-KW"/>
</dbReference>
<dbReference type="GO" id="GO:1905030">
    <property type="term" value="F:voltage-gated monoatomic ion channel activity involved in regulation of postsynaptic membrane potential"/>
    <property type="evidence" value="ECO:0000314"/>
    <property type="project" value="SynGO"/>
</dbReference>
<dbReference type="GO" id="GO:0099508">
    <property type="term" value="F:voltage-gated monoatomic ion channel activity involved in regulation of presynaptic membrane potential"/>
    <property type="evidence" value="ECO:0000314"/>
    <property type="project" value="SynGO"/>
</dbReference>
<dbReference type="GO" id="GO:0005249">
    <property type="term" value="F:voltage-gated potassium channel activity"/>
    <property type="evidence" value="ECO:0000314"/>
    <property type="project" value="UniProtKB"/>
</dbReference>
<dbReference type="GO" id="GO:0001508">
    <property type="term" value="P:action potential"/>
    <property type="evidence" value="ECO:0000318"/>
    <property type="project" value="GO_Central"/>
</dbReference>
<dbReference type="GO" id="GO:0061564">
    <property type="term" value="P:axon development"/>
    <property type="evidence" value="ECO:0000270"/>
    <property type="project" value="RGD"/>
</dbReference>
<dbReference type="GO" id="GO:0021987">
    <property type="term" value="P:cerebral cortex development"/>
    <property type="evidence" value="ECO:0000270"/>
    <property type="project" value="RGD"/>
</dbReference>
<dbReference type="GO" id="GO:0022038">
    <property type="term" value="P:corpus callosum development"/>
    <property type="evidence" value="ECO:0000270"/>
    <property type="project" value="RGD"/>
</dbReference>
<dbReference type="GO" id="GO:0030900">
    <property type="term" value="P:forebrain development"/>
    <property type="evidence" value="ECO:0000270"/>
    <property type="project" value="RGD"/>
</dbReference>
<dbReference type="GO" id="GO:1904456">
    <property type="term" value="P:negative regulation of neuronal action potential"/>
    <property type="evidence" value="ECO:0000315"/>
    <property type="project" value="RGD"/>
</dbReference>
<dbReference type="GO" id="GO:0021554">
    <property type="term" value="P:optic nerve development"/>
    <property type="evidence" value="ECO:0000270"/>
    <property type="project" value="RGD"/>
</dbReference>
<dbReference type="GO" id="GO:0071805">
    <property type="term" value="P:potassium ion transmembrane transport"/>
    <property type="evidence" value="ECO:0000318"/>
    <property type="project" value="GO_Central"/>
</dbReference>
<dbReference type="GO" id="GO:0051260">
    <property type="term" value="P:protein homooligomerization"/>
    <property type="evidence" value="ECO:0007669"/>
    <property type="project" value="InterPro"/>
</dbReference>
<dbReference type="GO" id="GO:0046928">
    <property type="term" value="P:regulation of neurotransmitter secretion"/>
    <property type="evidence" value="ECO:0000266"/>
    <property type="project" value="RGD"/>
</dbReference>
<dbReference type="CDD" id="cd18415">
    <property type="entry name" value="BTB_KCNC2_4"/>
    <property type="match status" value="1"/>
</dbReference>
<dbReference type="FunFam" id="1.10.287.70:FF:000011">
    <property type="entry name" value="Potassium channel, voltage-gated Shaw-related subfamily C, member 4"/>
    <property type="match status" value="1"/>
</dbReference>
<dbReference type="FunFam" id="1.20.120.350:FF:000014">
    <property type="entry name" value="Potassium channel, voltage-gated Shaw-related subfamily C, member 4"/>
    <property type="match status" value="1"/>
</dbReference>
<dbReference type="FunFam" id="3.30.710.10:FF:000062">
    <property type="entry name" value="potassium voltage-gated channel subfamily C member 4 isoform X2"/>
    <property type="match status" value="1"/>
</dbReference>
<dbReference type="Gene3D" id="1.10.287.70">
    <property type="match status" value="1"/>
</dbReference>
<dbReference type="Gene3D" id="3.30.710.10">
    <property type="entry name" value="Potassium Channel Kv1.1, Chain A"/>
    <property type="match status" value="1"/>
</dbReference>
<dbReference type="Gene3D" id="1.20.120.350">
    <property type="entry name" value="Voltage-gated potassium channels. Chain C"/>
    <property type="match status" value="1"/>
</dbReference>
<dbReference type="InterPro" id="IPR000210">
    <property type="entry name" value="BTB/POZ_dom"/>
</dbReference>
<dbReference type="InterPro" id="IPR005821">
    <property type="entry name" value="Ion_trans_dom"/>
</dbReference>
<dbReference type="InterPro" id="IPR003968">
    <property type="entry name" value="K_chnl_volt-dep_Kv"/>
</dbReference>
<dbReference type="InterPro" id="IPR003974">
    <property type="entry name" value="K_chnl_volt-dep_Kv3"/>
</dbReference>
<dbReference type="InterPro" id="IPR005405">
    <property type="entry name" value="K_chnl_volt-dep_Kv3.4"/>
</dbReference>
<dbReference type="InterPro" id="IPR021645">
    <property type="entry name" value="Shal-type_N"/>
</dbReference>
<dbReference type="InterPro" id="IPR011333">
    <property type="entry name" value="SKP1/BTB/POZ_sf"/>
</dbReference>
<dbReference type="InterPro" id="IPR003131">
    <property type="entry name" value="T1-type_BTB"/>
</dbReference>
<dbReference type="InterPro" id="IPR028325">
    <property type="entry name" value="VG_K_chnl"/>
</dbReference>
<dbReference type="InterPro" id="IPR027359">
    <property type="entry name" value="Volt_channel_dom_sf"/>
</dbReference>
<dbReference type="PANTHER" id="PTHR11537:SF126">
    <property type="entry name" value="POTASSIUM VOLTAGE-GATED CHANNEL SUBFAMILY C MEMBER 4"/>
    <property type="match status" value="1"/>
</dbReference>
<dbReference type="PANTHER" id="PTHR11537">
    <property type="entry name" value="VOLTAGE-GATED POTASSIUM CHANNEL"/>
    <property type="match status" value="1"/>
</dbReference>
<dbReference type="Pfam" id="PF02214">
    <property type="entry name" value="BTB_2"/>
    <property type="match status" value="1"/>
</dbReference>
<dbReference type="Pfam" id="PF00520">
    <property type="entry name" value="Ion_trans"/>
    <property type="match status" value="1"/>
</dbReference>
<dbReference type="Pfam" id="PF11601">
    <property type="entry name" value="Shal-type"/>
    <property type="match status" value="1"/>
</dbReference>
<dbReference type="PRINTS" id="PR00169">
    <property type="entry name" value="KCHANNEL"/>
</dbReference>
<dbReference type="PRINTS" id="PR01583">
    <property type="entry name" value="KV34CHANNEL"/>
</dbReference>
<dbReference type="PRINTS" id="PR01491">
    <property type="entry name" value="KVCHANNEL"/>
</dbReference>
<dbReference type="PRINTS" id="PR01498">
    <property type="entry name" value="SHAWCHANNEL"/>
</dbReference>
<dbReference type="SMART" id="SM00225">
    <property type="entry name" value="BTB"/>
    <property type="match status" value="1"/>
</dbReference>
<dbReference type="SUPFAM" id="SSF54695">
    <property type="entry name" value="POZ domain"/>
    <property type="match status" value="1"/>
</dbReference>
<dbReference type="SUPFAM" id="SSF81324">
    <property type="entry name" value="Voltage-gated potassium channels"/>
    <property type="match status" value="1"/>
</dbReference>
<reference key="1">
    <citation type="journal article" date="1991" name="FEBS Lett.">
        <title>Cloning and functional expression of a TEA-sensitive A-type potassium channel from rat brain.</title>
        <authorList>
            <person name="Schroeter K.H."/>
            <person name="Ruppersberg J.P."/>
            <person name="Wunder F."/>
            <person name="Rettig J."/>
            <person name="Stocker M."/>
            <person name="Pongs O."/>
        </authorList>
    </citation>
    <scope>NUCLEOTIDE SEQUENCE [MRNA]</scope>
    <scope>FUNCTION</scope>
    <scope>TRANSPORTER ACTIVITY</scope>
</reference>
<reference key="2">
    <citation type="journal article" date="1992" name="EMBO J.">
        <title>Characterization of a Shaw-related potassium channel family in rat brain.</title>
        <authorList>
            <person name="Rettig J."/>
            <person name="Wunder F."/>
            <person name="Stocker M."/>
            <person name="Lichtinghagen R."/>
            <person name="Mastiaux F."/>
            <person name="Beckh S."/>
            <person name="Kues W."/>
            <person name="Pedarzani P."/>
            <person name="Schroeter K.H."/>
            <person name="Ruppersberg J.P."/>
            <person name="Veh R."/>
            <person name="Pongs O."/>
        </authorList>
    </citation>
    <scope>FUNCTION</scope>
    <scope>TRANSPORTER ACTIVITY</scope>
    <scope>DOMAIN</scope>
</reference>
<reference key="3">
    <citation type="journal article" date="2003" name="Nat. Neurosci.">
        <title>Kv3.4 subunits enhance the repolarizing efficiency of Kv3.1 channels in fast-spiking neurons.</title>
        <authorList>
            <person name="Baranauskas G."/>
            <person name="Tkatch T."/>
            <person name="Nagata K."/>
            <person name="Yeh J.Z."/>
            <person name="Surmeier D.J."/>
        </authorList>
    </citation>
    <scope>FUNCTION</scope>
    <scope>TRANSPORTER ACTIVITY</scope>
    <scope>SUBUNIT</scope>
</reference>
<feature type="chain" id="PRO_0000054060" description="Voltage-gated potassium channel KCNC4">
    <location>
        <begin position="1"/>
        <end position="625"/>
    </location>
</feature>
<feature type="topological domain" description="Cytoplasmic" evidence="4">
    <location>
        <begin position="1"/>
        <end position="227"/>
    </location>
</feature>
<feature type="transmembrane region" description="Helical; Name=Segment S1" evidence="4">
    <location>
        <begin position="228"/>
        <end position="248"/>
    </location>
</feature>
<feature type="transmembrane region" description="Helical; Name=Segment S2" evidence="4">
    <location>
        <begin position="279"/>
        <end position="299"/>
    </location>
</feature>
<feature type="topological domain" description="Cytoplasmic" evidence="4">
    <location>
        <begin position="300"/>
        <end position="313"/>
    </location>
</feature>
<feature type="transmembrane region" description="Helical; Name=Segment S3" evidence="4">
    <location>
        <begin position="314"/>
        <end position="334"/>
    </location>
</feature>
<feature type="transmembrane region" description="Helical; Voltage-sensor; Name=Segment S4" evidence="4">
    <location>
        <begin position="346"/>
        <end position="365"/>
    </location>
</feature>
<feature type="topological domain" description="Cytoplasmic" evidence="4">
    <location>
        <begin position="366"/>
        <end position="381"/>
    </location>
</feature>
<feature type="transmembrane region" description="Helical; Name=Segment S5" evidence="4">
    <location>
        <begin position="382"/>
        <end position="402"/>
    </location>
</feature>
<feature type="transmembrane region" description="Helical; Name=Segment S6" evidence="4">
    <location>
        <begin position="453"/>
        <end position="473"/>
    </location>
</feature>
<feature type="topological domain" description="Cytoplasmic" evidence="4">
    <location>
        <begin position="474"/>
        <end position="625"/>
    </location>
</feature>
<feature type="region of interest" description="Inactivation gate">
    <location>
        <begin position="1"/>
        <end position="28"/>
    </location>
</feature>
<feature type="region of interest" description="Disordered" evidence="5">
    <location>
        <begin position="1"/>
        <end position="24"/>
    </location>
</feature>
<feature type="region of interest" description="Disordered" evidence="5">
    <location>
        <begin position="65"/>
        <end position="86"/>
    </location>
</feature>
<feature type="region of interest" description="Disordered" evidence="5">
    <location>
        <begin position="490"/>
        <end position="581"/>
    </location>
</feature>
<feature type="short sequence motif" description="Selectivity filter" evidence="1">
    <location>
        <begin position="437"/>
        <end position="442"/>
    </location>
</feature>
<feature type="compositionally biased region" description="Gly residues" evidence="5">
    <location>
        <begin position="77"/>
        <end position="86"/>
    </location>
</feature>
<feature type="compositionally biased region" description="Basic and acidic residues" evidence="5">
    <location>
        <begin position="528"/>
        <end position="543"/>
    </location>
</feature>
<feature type="binding site" evidence="2">
    <location>
        <position position="117"/>
    </location>
    <ligand>
        <name>Zn(2+)</name>
        <dbReference type="ChEBI" id="CHEBI:29105"/>
    </ligand>
</feature>
<feature type="binding site" evidence="2">
    <location>
        <position position="123"/>
    </location>
    <ligand>
        <name>Zn(2+)</name>
        <dbReference type="ChEBI" id="CHEBI:29105"/>
    </ligand>
</feature>
<feature type="binding site" evidence="2">
    <location>
        <position position="144"/>
    </location>
    <ligand>
        <name>Zn(2+)</name>
        <dbReference type="ChEBI" id="CHEBI:29105"/>
    </ligand>
</feature>
<feature type="binding site" evidence="2">
    <location>
        <position position="145"/>
    </location>
    <ligand>
        <name>Zn(2+)</name>
        <dbReference type="ChEBI" id="CHEBI:29105"/>
    </ligand>
</feature>
<feature type="binding site" evidence="2">
    <location>
        <position position="437"/>
    </location>
    <ligand>
        <name>K(+)</name>
        <dbReference type="ChEBI" id="CHEBI:29103"/>
        <note>ligand shared between homotetrameric partners</note>
    </ligand>
</feature>
<feature type="binding site" evidence="2">
    <location>
        <position position="438"/>
    </location>
    <ligand>
        <name>K(+)</name>
        <dbReference type="ChEBI" id="CHEBI:29103"/>
        <note>ligand shared between homotetrameric partners</note>
    </ligand>
</feature>
<feature type="binding site" evidence="2">
    <location>
        <position position="439"/>
    </location>
    <ligand>
        <name>K(+)</name>
        <dbReference type="ChEBI" id="CHEBI:29103"/>
        <note>ligand shared between homotetrameric partners</note>
    </ligand>
</feature>
<feature type="binding site" evidence="2">
    <location>
        <position position="440"/>
    </location>
    <ligand>
        <name>K(+)</name>
        <dbReference type="ChEBI" id="CHEBI:29103"/>
        <note>ligand shared between homotetrameric partners</note>
    </ligand>
</feature>
<feature type="modified residue" description="Phosphoserine" evidence="3">
    <location>
        <position position="8"/>
    </location>
</feature>
<feature type="modified residue" description="Phosphoserine" evidence="3">
    <location>
        <position position="9"/>
    </location>
</feature>
<feature type="modified residue" description="Phosphoserine" evidence="3">
    <location>
        <position position="15"/>
    </location>
</feature>
<feature type="modified residue" description="Phosphoserine" evidence="3">
    <location>
        <position position="21"/>
    </location>
</feature>
<feature type="glycosylation site" description="N-linked (GlcNAc...) asparagine" evidence="4">
    <location>
        <position position="257"/>
    </location>
</feature>
<feature type="glycosylation site" description="N-linked (GlcNAc...) asparagine" evidence="4">
    <location>
        <position position="266"/>
    </location>
</feature>
<evidence type="ECO:0000250" key="1"/>
<evidence type="ECO:0000250" key="2">
    <source>
        <dbReference type="UniProtKB" id="P48547"/>
    </source>
</evidence>
<evidence type="ECO:0000250" key="3">
    <source>
        <dbReference type="UniProtKB" id="Q03721"/>
    </source>
</evidence>
<evidence type="ECO:0000255" key="4"/>
<evidence type="ECO:0000256" key="5">
    <source>
        <dbReference type="SAM" id="MobiDB-lite"/>
    </source>
</evidence>
<evidence type="ECO:0000269" key="6">
    <source>
    </source>
</evidence>
<evidence type="ECO:0000269" key="7">
    <source>
    </source>
</evidence>
<evidence type="ECO:0000269" key="8">
    <source>
    </source>
</evidence>
<evidence type="ECO:0000303" key="9">
    <source>
    </source>
</evidence>
<evidence type="ECO:0000305" key="10"/>
<evidence type="ECO:0000312" key="11">
    <source>
        <dbReference type="RGD" id="1589169"/>
    </source>
</evidence>
<proteinExistence type="evidence at protein level"/>
<comment type="function">
    <text evidence="6 7 8">Voltage-gated potassium channel that opens in response to the voltage difference across the membrane, forming a potassium-selective channel through which potassium ions pass in accordance with their electrochemical gradient (PubMed:12592408, PubMed:1378392, PubMed:1840526). The channel displays rapid activation and inactivation kinetics (PubMed:12592408, PubMed:1378392, PubMed:1840526).</text>
</comment>
<comment type="catalytic activity">
    <reaction evidence="6 7 8">
        <text>K(+)(in) = K(+)(out)</text>
        <dbReference type="Rhea" id="RHEA:29463"/>
        <dbReference type="ChEBI" id="CHEBI:29103"/>
    </reaction>
</comment>
<comment type="subunit">
    <text evidence="6 10">Homotetramer (Probable). Heterotetramer of potassium channel proteins.</text>
</comment>
<comment type="subcellular location">
    <subcellularLocation>
        <location>Membrane</location>
        <topology>Multi-pass membrane protein</topology>
    </subcellularLocation>
</comment>
<comment type="domain">
    <text evidence="7">The cytoplasmic N-terminus mediates N-type inactivation.</text>
</comment>
<comment type="domain">
    <text evidence="10">Composed of the tetramerization T1 domain, six membrane spanning regions including voltage-sensing (S1-S4) and pore domains (S5- S6) and a variable C-terminal domain.</text>
</comment>
<comment type="PTM">
    <text evidence="3">Phosphorylation of serine residues in the inactivation gate inhibits rapid channel closure.</text>
</comment>
<comment type="similarity">
    <text evidence="10">Belongs to the potassium channel family. C (Shaw) (TC 1.A.1.2) subfamily. Kv3.4/KCNC4 sub-subfamily.</text>
</comment>
<keyword id="KW-0325">Glycoprotein</keyword>
<keyword id="KW-0407">Ion channel</keyword>
<keyword id="KW-0406">Ion transport</keyword>
<keyword id="KW-0472">Membrane</keyword>
<keyword id="KW-0479">Metal-binding</keyword>
<keyword id="KW-0597">Phosphoprotein</keyword>
<keyword id="KW-0630">Potassium</keyword>
<keyword id="KW-0631">Potassium channel</keyword>
<keyword id="KW-0633">Potassium transport</keyword>
<keyword id="KW-1185">Reference proteome</keyword>
<keyword id="KW-0812">Transmembrane</keyword>
<keyword id="KW-1133">Transmembrane helix</keyword>
<keyword id="KW-0813">Transport</keyword>
<keyword id="KW-0851">Voltage-gated channel</keyword>
<keyword id="KW-0862">Zinc</keyword>
<protein>
    <recommendedName>
        <fullName evidence="10">Voltage-gated potassium channel KCNC4</fullName>
    </recommendedName>
    <alternativeName>
        <fullName>Potassium voltage-gated channel subfamily C member 4</fullName>
    </alternativeName>
    <alternativeName>
        <fullName evidence="9">Raw3</fullName>
    </alternativeName>
    <alternativeName>
        <fullName>Voltage-gated potassium channel subunit Kv3.4</fullName>
    </alternativeName>
</protein>
<accession>Q63734</accession>
<gene>
    <name evidence="11" type="primary">Kcnc4</name>
</gene>
<name>KCNC4_RAT</name>
<sequence>MISSVCVSSYRGRKSGNKPPSKTCLKEEMAKGEASEKIIINVGGTRHETYRSTLRTLPGTRLAWLADPDGGGRPESDGGGAGSSGSSGGGGGCEFFFDRHPGVFAYVLNYYRTGKLHCPADVCGPLFEEELTFWGIDETDVEPCCWMTYRQHRDAEEALDIFESPDGGGGGAGPGDEAGDDERELALQRLGPHEGGSGPGAGSGGCRGWQPRMWALFEDPYSSRAARVVAFASLFFILVSITTFCLETHEAFNIDRNVTEIHRVGNITSVRFRREVETEPILTYIEGVCVMWFTLEFLVRIVCCPDTLDFVKNLLNIIDFVAILPFYLEVGLSGLSSKAARDVLGFLRVVRFVRILRIFKLTRHFVGLRVLGHTLRASTNEFLLLIIFLALGVLIFATMIYYAERIGARPSDPRGNDHTDFKNIPIGFWWAVVTMTTLGYGDMYPKTWSGMLVGALCALAGVLTIAMPVPVIVNNFGMYYSLAMAKQKLPKKRKKHVPRPPQLESPIYCKSEETSPRDSTYSDTSPPAREEGMVERKRADSKQNGDANAVLSDEEGAGLTQPLASAPTPEERRALRRSGTRDRNKKAAACFLLSAGDYACADGSVQKEGSVEPKACVPVSHTCAL</sequence>